<name>NOP6_YEAST</name>
<gene>
    <name type="primary">NOP6</name>
    <name type="ordered locus">YDL213C</name>
    <name type="ORF">D1018</name>
</gene>
<accession>Q07623</accession>
<accession>D6VRE1</accession>
<keyword id="KW-0002">3D-structure</keyword>
<keyword id="KW-0539">Nucleus</keyword>
<keyword id="KW-0597">Phosphoprotein</keyword>
<keyword id="KW-1185">Reference proteome</keyword>
<keyword id="KW-0690">Ribosome biogenesis</keyword>
<keyword id="KW-0694">RNA-binding</keyword>
<keyword id="KW-0698">rRNA processing</keyword>
<reference key="1">
    <citation type="journal article" date="1997" name="Yeast">
        <title>The nucleotide sequence of a 39 kb segment of yeast chromosome IV: 12 new open reading frames, nine known genes and one gene for Gly-tRNA.</title>
        <authorList>
            <person name="Bahr A."/>
            <person name="Moeller-Rieker S."/>
            <person name="Hankeln T."/>
            <person name="Kraemer C."/>
            <person name="Protin U."/>
            <person name="Schmidt E.R."/>
        </authorList>
    </citation>
    <scope>NUCLEOTIDE SEQUENCE [GENOMIC DNA]</scope>
    <source>
        <strain>ATCC 204508 / S288c</strain>
    </source>
</reference>
<reference key="2">
    <citation type="journal article" date="1997" name="Nature">
        <title>The nucleotide sequence of Saccharomyces cerevisiae chromosome IV.</title>
        <authorList>
            <person name="Jacq C."/>
            <person name="Alt-Moerbe J."/>
            <person name="Andre B."/>
            <person name="Arnold W."/>
            <person name="Bahr A."/>
            <person name="Ballesta J.P.G."/>
            <person name="Bargues M."/>
            <person name="Baron L."/>
            <person name="Becker A."/>
            <person name="Biteau N."/>
            <person name="Bloecker H."/>
            <person name="Blugeon C."/>
            <person name="Boskovic J."/>
            <person name="Brandt P."/>
            <person name="Brueckner M."/>
            <person name="Buitrago M.J."/>
            <person name="Coster F."/>
            <person name="Delaveau T."/>
            <person name="del Rey F."/>
            <person name="Dujon B."/>
            <person name="Eide L.G."/>
            <person name="Garcia-Cantalejo J.M."/>
            <person name="Goffeau A."/>
            <person name="Gomez-Peris A."/>
            <person name="Granotier C."/>
            <person name="Hanemann V."/>
            <person name="Hankeln T."/>
            <person name="Hoheisel J.D."/>
            <person name="Jaeger W."/>
            <person name="Jimenez A."/>
            <person name="Jonniaux J.-L."/>
            <person name="Kraemer C."/>
            <person name="Kuester H."/>
            <person name="Laamanen P."/>
            <person name="Legros Y."/>
            <person name="Louis E.J."/>
            <person name="Moeller-Rieker S."/>
            <person name="Monnet A."/>
            <person name="Moro M."/>
            <person name="Mueller-Auer S."/>
            <person name="Nussbaumer B."/>
            <person name="Paricio N."/>
            <person name="Paulin L."/>
            <person name="Perea J."/>
            <person name="Perez-Alonso M."/>
            <person name="Perez-Ortin J.E."/>
            <person name="Pohl T.M."/>
            <person name="Prydz H."/>
            <person name="Purnelle B."/>
            <person name="Rasmussen S.W."/>
            <person name="Remacha M.A."/>
            <person name="Revuelta J.L."/>
            <person name="Rieger M."/>
            <person name="Salom D."/>
            <person name="Saluz H.P."/>
            <person name="Saiz J.E."/>
            <person name="Saren A.-M."/>
            <person name="Schaefer M."/>
            <person name="Scharfe M."/>
            <person name="Schmidt E.R."/>
            <person name="Schneider C."/>
            <person name="Scholler P."/>
            <person name="Schwarz S."/>
            <person name="Soler-Mira A."/>
            <person name="Urrestarazu L.A."/>
            <person name="Verhasselt P."/>
            <person name="Vissers S."/>
            <person name="Voet M."/>
            <person name="Volckaert G."/>
            <person name="Wagner G."/>
            <person name="Wambutt R."/>
            <person name="Wedler E."/>
            <person name="Wedler H."/>
            <person name="Woelfl S."/>
            <person name="Harris D.E."/>
            <person name="Bowman S."/>
            <person name="Brown D."/>
            <person name="Churcher C.M."/>
            <person name="Connor R."/>
            <person name="Dedman K."/>
            <person name="Gentles S."/>
            <person name="Hamlin N."/>
            <person name="Hunt S."/>
            <person name="Jones L."/>
            <person name="McDonald S."/>
            <person name="Murphy L.D."/>
            <person name="Niblett D."/>
            <person name="Odell C."/>
            <person name="Oliver K."/>
            <person name="Rajandream M.A."/>
            <person name="Richards C."/>
            <person name="Shore L."/>
            <person name="Walsh S.V."/>
            <person name="Barrell B.G."/>
            <person name="Dietrich F.S."/>
            <person name="Mulligan J.T."/>
            <person name="Allen E."/>
            <person name="Araujo R."/>
            <person name="Aviles E."/>
            <person name="Berno A."/>
            <person name="Carpenter J."/>
            <person name="Chen E."/>
            <person name="Cherry J.M."/>
            <person name="Chung E."/>
            <person name="Duncan M."/>
            <person name="Hunicke-Smith S."/>
            <person name="Hyman R.W."/>
            <person name="Komp C."/>
            <person name="Lashkari D."/>
            <person name="Lew H."/>
            <person name="Lin D."/>
            <person name="Mosedale D."/>
            <person name="Nakahara K."/>
            <person name="Namath A."/>
            <person name="Oefner P."/>
            <person name="Oh C."/>
            <person name="Petel F.X."/>
            <person name="Roberts D."/>
            <person name="Schramm S."/>
            <person name="Schroeder M."/>
            <person name="Shogren T."/>
            <person name="Shroff N."/>
            <person name="Winant A."/>
            <person name="Yelton M.A."/>
            <person name="Botstein D."/>
            <person name="Davis R.W."/>
            <person name="Johnston M."/>
            <person name="Andrews S."/>
            <person name="Brinkman R."/>
            <person name="Cooper J."/>
            <person name="Ding H."/>
            <person name="Du Z."/>
            <person name="Favello A."/>
            <person name="Fulton L."/>
            <person name="Gattung S."/>
            <person name="Greco T."/>
            <person name="Hallsworth K."/>
            <person name="Hawkins J."/>
            <person name="Hillier L.W."/>
            <person name="Jier M."/>
            <person name="Johnson D."/>
            <person name="Johnston L."/>
            <person name="Kirsten J."/>
            <person name="Kucaba T."/>
            <person name="Langston Y."/>
            <person name="Latreille P."/>
            <person name="Le T."/>
            <person name="Mardis E."/>
            <person name="Menezes S."/>
            <person name="Miller N."/>
            <person name="Nhan M."/>
            <person name="Pauley A."/>
            <person name="Peluso D."/>
            <person name="Rifkin L."/>
            <person name="Riles L."/>
            <person name="Taich A."/>
            <person name="Trevaskis E."/>
            <person name="Vignati D."/>
            <person name="Wilcox L."/>
            <person name="Wohldman P."/>
            <person name="Vaudin M."/>
            <person name="Wilson R."/>
            <person name="Waterston R."/>
            <person name="Albermann K."/>
            <person name="Hani J."/>
            <person name="Heumann K."/>
            <person name="Kleine K."/>
            <person name="Mewes H.-W."/>
            <person name="Zollner A."/>
            <person name="Zaccaria P."/>
        </authorList>
    </citation>
    <scope>NUCLEOTIDE SEQUENCE [LARGE SCALE GENOMIC DNA]</scope>
    <source>
        <strain>ATCC 204508 / S288c</strain>
    </source>
</reference>
<reference key="3">
    <citation type="journal article" date="2014" name="G3 (Bethesda)">
        <title>The reference genome sequence of Saccharomyces cerevisiae: Then and now.</title>
        <authorList>
            <person name="Engel S.R."/>
            <person name="Dietrich F.S."/>
            <person name="Fisk D.G."/>
            <person name="Binkley G."/>
            <person name="Balakrishnan R."/>
            <person name="Costanzo M.C."/>
            <person name="Dwight S.S."/>
            <person name="Hitz B.C."/>
            <person name="Karra K."/>
            <person name="Nash R.S."/>
            <person name="Weng S."/>
            <person name="Wong E.D."/>
            <person name="Lloyd P."/>
            <person name="Skrzypek M.S."/>
            <person name="Miyasato S.R."/>
            <person name="Simison M."/>
            <person name="Cherry J.M."/>
        </authorList>
    </citation>
    <scope>GENOME REANNOTATION</scope>
    <source>
        <strain>ATCC 204508 / S288c</strain>
    </source>
</reference>
<reference key="4">
    <citation type="journal article" date="2007" name="Genome Res.">
        <title>Approaching a complete repository of sequence-verified protein-encoding clones for Saccharomyces cerevisiae.</title>
        <authorList>
            <person name="Hu Y."/>
            <person name="Rolfs A."/>
            <person name="Bhullar B."/>
            <person name="Murthy T.V.S."/>
            <person name="Zhu C."/>
            <person name="Berger M.F."/>
            <person name="Camargo A.A."/>
            <person name="Kelley F."/>
            <person name="McCarron S."/>
            <person name="Jepson D."/>
            <person name="Richardson A."/>
            <person name="Raphael J."/>
            <person name="Moreira D."/>
            <person name="Taycher E."/>
            <person name="Zuo D."/>
            <person name="Mohr S."/>
            <person name="Kane M.F."/>
            <person name="Williamson J."/>
            <person name="Simpson A.J.G."/>
            <person name="Bulyk M.L."/>
            <person name="Harlow E."/>
            <person name="Marsischky G."/>
            <person name="Kolodner R.D."/>
            <person name="LaBaer J."/>
        </authorList>
    </citation>
    <scope>NUCLEOTIDE SEQUENCE [GENOMIC DNA]</scope>
    <source>
        <strain>ATCC 204508 / S288c</strain>
    </source>
</reference>
<reference key="5">
    <citation type="journal article" date="2003" name="Nature">
        <title>Global analysis of protein localization in budding yeast.</title>
        <authorList>
            <person name="Huh W.-K."/>
            <person name="Falvo J.V."/>
            <person name="Gerke L.C."/>
            <person name="Carroll A.S."/>
            <person name="Howson R.W."/>
            <person name="Weissman J.S."/>
            <person name="O'Shea E.K."/>
        </authorList>
    </citation>
    <scope>SUBCELLULAR LOCATION [LARGE SCALE ANALYSIS]</scope>
</reference>
<reference key="6">
    <citation type="journal article" date="2003" name="Nature">
        <title>Global analysis of protein expression in yeast.</title>
        <authorList>
            <person name="Ghaemmaghami S."/>
            <person name="Huh W.-K."/>
            <person name="Bower K."/>
            <person name="Howson R.W."/>
            <person name="Belle A."/>
            <person name="Dephoure N."/>
            <person name="O'Shea E.K."/>
            <person name="Weissman J.S."/>
        </authorList>
    </citation>
    <scope>LEVEL OF PROTEIN EXPRESSION [LARGE SCALE ANALYSIS]</scope>
</reference>
<reference key="7">
    <citation type="journal article" date="2003" name="Proc. Natl. Acad. Sci. U.S.A.">
        <title>Predicting protein functions from redundancies in large-scale protein interaction networks.</title>
        <authorList>
            <person name="Samanta M.P."/>
            <person name="Liang S."/>
        </authorList>
    </citation>
    <scope>PREDICTION OF FUNCTION</scope>
</reference>
<reference key="8">
    <citation type="journal article" date="2008" name="Mol. Cell. Proteomics">
        <title>A multidimensional chromatography technology for in-depth phosphoproteome analysis.</title>
        <authorList>
            <person name="Albuquerque C.P."/>
            <person name="Smolka M.B."/>
            <person name="Payne S.H."/>
            <person name="Bafna V."/>
            <person name="Eng J."/>
            <person name="Zhou H."/>
        </authorList>
    </citation>
    <scope>PHOSPHORYLATION [LARGE SCALE ANALYSIS] AT SER-45</scope>
    <scope>IDENTIFICATION BY MASS SPECTROMETRY [LARGE SCALE ANALYSIS]</scope>
</reference>
<reference key="9">
    <citation type="journal article" date="2009" name="Science">
        <title>Global analysis of Cdk1 substrate phosphorylation sites provides insights into evolution.</title>
        <authorList>
            <person name="Holt L.J."/>
            <person name="Tuch B.B."/>
            <person name="Villen J."/>
            <person name="Johnson A.D."/>
            <person name="Gygi S.P."/>
            <person name="Morgan D.O."/>
        </authorList>
    </citation>
    <scope>PHOSPHORYLATION [LARGE SCALE ANALYSIS] AT SER-160</scope>
    <scope>IDENTIFICATION BY MASS SPECTROMETRY [LARGE SCALE ANALYSIS]</scope>
</reference>
<protein>
    <recommendedName>
        <fullName>Nucleolar protein 6</fullName>
    </recommendedName>
</protein>
<dbReference type="EMBL" id="X99000">
    <property type="protein sequence ID" value="CAA67478.1"/>
    <property type="molecule type" value="Genomic_DNA"/>
</dbReference>
<dbReference type="EMBL" id="Z74261">
    <property type="protein sequence ID" value="CAA98791.1"/>
    <property type="molecule type" value="Genomic_DNA"/>
</dbReference>
<dbReference type="EMBL" id="AY557652">
    <property type="protein sequence ID" value="AAS55978.1"/>
    <property type="molecule type" value="Genomic_DNA"/>
</dbReference>
<dbReference type="EMBL" id="BK006938">
    <property type="protein sequence ID" value="DAA11651.1"/>
    <property type="molecule type" value="Genomic_DNA"/>
</dbReference>
<dbReference type="PIR" id="S67772">
    <property type="entry name" value="S67772"/>
</dbReference>
<dbReference type="RefSeq" id="NP_010068.1">
    <property type="nucleotide sequence ID" value="NM_001180273.1"/>
</dbReference>
<dbReference type="PDB" id="2MZJ">
    <property type="method" value="NMR"/>
    <property type="chains" value="A=75-156"/>
</dbReference>
<dbReference type="PDBsum" id="2MZJ"/>
<dbReference type="SMR" id="Q07623"/>
<dbReference type="BioGRID" id="31832">
    <property type="interactions" value="286"/>
</dbReference>
<dbReference type="DIP" id="DIP-1807N"/>
<dbReference type="FunCoup" id="Q07623">
    <property type="interactions" value="409"/>
</dbReference>
<dbReference type="IntAct" id="Q07623">
    <property type="interactions" value="94"/>
</dbReference>
<dbReference type="MINT" id="Q07623"/>
<dbReference type="STRING" id="4932.YDL213C"/>
<dbReference type="iPTMnet" id="Q07623"/>
<dbReference type="PaxDb" id="4932-YDL213C"/>
<dbReference type="PeptideAtlas" id="Q07623"/>
<dbReference type="EnsemblFungi" id="YDL213C_mRNA">
    <property type="protein sequence ID" value="YDL213C"/>
    <property type="gene ID" value="YDL213C"/>
</dbReference>
<dbReference type="GeneID" id="851313"/>
<dbReference type="KEGG" id="sce:YDL213C"/>
<dbReference type="AGR" id="SGD:S000002372"/>
<dbReference type="SGD" id="S000002372">
    <property type="gene designation" value="NOP6"/>
</dbReference>
<dbReference type="VEuPathDB" id="FungiDB:YDL213C"/>
<dbReference type="eggNOG" id="ENOG502QVC2">
    <property type="taxonomic scope" value="Eukaryota"/>
</dbReference>
<dbReference type="HOGENOM" id="CLU_037639_2_0_1"/>
<dbReference type="InParanoid" id="Q07623"/>
<dbReference type="OMA" id="NIQRRMD"/>
<dbReference type="OrthoDB" id="167718at2759"/>
<dbReference type="BioCyc" id="YEAST:G3O-29595-MONOMER"/>
<dbReference type="BioGRID-ORCS" id="851313">
    <property type="hits" value="10 hits in 10 CRISPR screens"/>
</dbReference>
<dbReference type="PRO" id="PR:Q07623"/>
<dbReference type="Proteomes" id="UP000002311">
    <property type="component" value="Chromosome IV"/>
</dbReference>
<dbReference type="RNAct" id="Q07623">
    <property type="molecule type" value="protein"/>
</dbReference>
<dbReference type="GO" id="GO:0030686">
    <property type="term" value="C:90S preribosome"/>
    <property type="evidence" value="ECO:0000314"/>
    <property type="project" value="GO_Central"/>
</dbReference>
<dbReference type="GO" id="GO:0005730">
    <property type="term" value="C:nucleolus"/>
    <property type="evidence" value="ECO:0000314"/>
    <property type="project" value="SGD"/>
</dbReference>
<dbReference type="GO" id="GO:0032040">
    <property type="term" value="C:small-subunit processome"/>
    <property type="evidence" value="ECO:0000353"/>
    <property type="project" value="ComplexPortal"/>
</dbReference>
<dbReference type="GO" id="GO:0043024">
    <property type="term" value="F:ribosomal small subunit binding"/>
    <property type="evidence" value="ECO:0000318"/>
    <property type="project" value="GO_Central"/>
</dbReference>
<dbReference type="GO" id="GO:0033592">
    <property type="term" value="F:RNA strand annealing activity"/>
    <property type="evidence" value="ECO:0000318"/>
    <property type="project" value="GO_Central"/>
</dbReference>
<dbReference type="GO" id="GO:0034057">
    <property type="term" value="F:RNA strand-exchange activity"/>
    <property type="evidence" value="ECO:0000318"/>
    <property type="project" value="GO_Central"/>
</dbReference>
<dbReference type="GO" id="GO:0019843">
    <property type="term" value="F:rRNA binding"/>
    <property type="evidence" value="ECO:0000314"/>
    <property type="project" value="SGD"/>
</dbReference>
<dbReference type="GO" id="GO:0030515">
    <property type="term" value="F:snoRNA binding"/>
    <property type="evidence" value="ECO:0000314"/>
    <property type="project" value="SGD"/>
</dbReference>
<dbReference type="GO" id="GO:0097010">
    <property type="term" value="P:eukaryotic translation initiation factor 4F complex assembly"/>
    <property type="evidence" value="ECO:0000318"/>
    <property type="project" value="GO_Central"/>
</dbReference>
<dbReference type="GO" id="GO:0001731">
    <property type="term" value="P:formation of translation preinitiation complex"/>
    <property type="evidence" value="ECO:0000318"/>
    <property type="project" value="GO_Central"/>
</dbReference>
<dbReference type="GO" id="GO:0030490">
    <property type="term" value="P:maturation of SSU-rRNA"/>
    <property type="evidence" value="ECO:0000303"/>
    <property type="project" value="ComplexPortal"/>
</dbReference>
<dbReference type="GO" id="GO:0042274">
    <property type="term" value="P:ribosomal small subunit biogenesis"/>
    <property type="evidence" value="ECO:0000316"/>
    <property type="project" value="SGD"/>
</dbReference>
<dbReference type="CDD" id="cd12400">
    <property type="entry name" value="RRM_Nop6"/>
    <property type="match status" value="1"/>
</dbReference>
<dbReference type="FunFam" id="3.30.70.330:FF:000573">
    <property type="entry name" value="Nop6p"/>
    <property type="match status" value="1"/>
</dbReference>
<dbReference type="Gene3D" id="3.30.70.330">
    <property type="match status" value="1"/>
</dbReference>
<dbReference type="InterPro" id="IPR034228">
    <property type="entry name" value="Nop6_RRM"/>
</dbReference>
<dbReference type="InterPro" id="IPR012677">
    <property type="entry name" value="Nucleotide-bd_a/b_plait_sf"/>
</dbReference>
<dbReference type="InterPro" id="IPR035979">
    <property type="entry name" value="RBD_domain_sf"/>
</dbReference>
<dbReference type="InterPro" id="IPR000504">
    <property type="entry name" value="RRM_dom"/>
</dbReference>
<dbReference type="SUPFAM" id="SSF54928">
    <property type="entry name" value="RNA-binding domain, RBD"/>
    <property type="match status" value="1"/>
</dbReference>
<dbReference type="PROSITE" id="PS50102">
    <property type="entry name" value="RRM"/>
    <property type="match status" value="1"/>
</dbReference>
<sequence>MGSEEDKKLTKKQLKAQQFRKSKEEKDQEKDVKKEQAPEGKRPNSAAGNDGEEPVKKKRKTRRGRGGKGKNGKKGNRFIVFVGSLPRDITAVELQNHFKNSSPDQIRLRADKGIAFLEFDADKDRTGIQRRMDIALLQHGTLLKEKKINVELTVGGGGNSQERLEKLKNKNIKLDEERKERLTKMINDGNQKKIAKTTATAAQTSGTDNKPVPAGIHPDRAKLLK</sequence>
<proteinExistence type="evidence at protein level"/>
<organism>
    <name type="scientific">Saccharomyces cerevisiae (strain ATCC 204508 / S288c)</name>
    <name type="common">Baker's yeast</name>
    <dbReference type="NCBI Taxonomy" id="559292"/>
    <lineage>
        <taxon>Eukaryota</taxon>
        <taxon>Fungi</taxon>
        <taxon>Dikarya</taxon>
        <taxon>Ascomycota</taxon>
        <taxon>Saccharomycotina</taxon>
        <taxon>Saccharomycetes</taxon>
        <taxon>Saccharomycetales</taxon>
        <taxon>Saccharomycetaceae</taxon>
        <taxon>Saccharomyces</taxon>
    </lineage>
</organism>
<comment type="function">
    <text>Predicted to be involved in rRNA processing.</text>
</comment>
<comment type="interaction">
    <interactant intactId="EBI-32695">
        <id>Q07623</id>
    </interactant>
    <interactant intactId="EBI-4105">
        <id>P33322</id>
        <label>CBF5</label>
    </interactant>
    <organismsDiffer>false</organismsDiffer>
    <experiments>2</experiments>
</comment>
<comment type="subcellular location">
    <subcellularLocation>
        <location evidence="3">Nucleus</location>
        <location evidence="3">Nucleolus</location>
    </subcellularLocation>
</comment>
<comment type="miscellaneous">
    <text evidence="4">Present with 8970 molecules/cell in log phase SD medium.</text>
</comment>
<comment type="similarity">
    <text evidence="5">Belongs to the RRM NOP6 family.</text>
</comment>
<feature type="chain" id="PRO_0000268691" description="Nucleolar protein 6">
    <location>
        <begin position="1"/>
        <end position="225"/>
    </location>
</feature>
<feature type="domain" description="RRM" evidence="1">
    <location>
        <begin position="78"/>
        <end position="155"/>
    </location>
</feature>
<feature type="region of interest" description="Disordered" evidence="2">
    <location>
        <begin position="1"/>
        <end position="75"/>
    </location>
</feature>
<feature type="region of interest" description="Disordered" evidence="2">
    <location>
        <begin position="187"/>
        <end position="225"/>
    </location>
</feature>
<feature type="compositionally biased region" description="Basic residues" evidence="2">
    <location>
        <begin position="9"/>
        <end position="20"/>
    </location>
</feature>
<feature type="compositionally biased region" description="Basic and acidic residues" evidence="2">
    <location>
        <begin position="21"/>
        <end position="42"/>
    </location>
</feature>
<feature type="compositionally biased region" description="Basic residues" evidence="2">
    <location>
        <begin position="56"/>
        <end position="75"/>
    </location>
</feature>
<feature type="modified residue" description="Phosphoserine" evidence="6">
    <location>
        <position position="45"/>
    </location>
</feature>
<feature type="modified residue" description="Phosphoserine" evidence="7">
    <location>
        <position position="160"/>
    </location>
</feature>
<feature type="strand" evidence="8">
    <location>
        <begin position="77"/>
        <end position="83"/>
    </location>
</feature>
<feature type="helix" evidence="8">
    <location>
        <begin position="91"/>
        <end position="98"/>
    </location>
</feature>
<feature type="turn" evidence="8">
    <location>
        <begin position="99"/>
        <end position="101"/>
    </location>
</feature>
<feature type="strand" evidence="8">
    <location>
        <begin position="107"/>
        <end position="109"/>
    </location>
</feature>
<feature type="helix" evidence="8">
    <location>
        <begin position="110"/>
        <end position="112"/>
    </location>
</feature>
<feature type="strand" evidence="8">
    <location>
        <begin position="114"/>
        <end position="120"/>
    </location>
</feature>
<feature type="helix" evidence="8">
    <location>
        <begin position="121"/>
        <end position="123"/>
    </location>
</feature>
<feature type="turn" evidence="8">
    <location>
        <begin position="125"/>
        <end position="127"/>
    </location>
</feature>
<feature type="helix" evidence="8">
    <location>
        <begin position="128"/>
        <end position="136"/>
    </location>
</feature>
<feature type="turn" evidence="8">
    <location>
        <begin position="137"/>
        <end position="140"/>
    </location>
</feature>
<feature type="strand" evidence="8">
    <location>
        <begin position="149"/>
        <end position="154"/>
    </location>
</feature>
<evidence type="ECO:0000255" key="1">
    <source>
        <dbReference type="PROSITE-ProRule" id="PRU00176"/>
    </source>
</evidence>
<evidence type="ECO:0000256" key="2">
    <source>
        <dbReference type="SAM" id="MobiDB-lite"/>
    </source>
</evidence>
<evidence type="ECO:0000269" key="3">
    <source>
    </source>
</evidence>
<evidence type="ECO:0000269" key="4">
    <source>
    </source>
</evidence>
<evidence type="ECO:0000305" key="5"/>
<evidence type="ECO:0007744" key="6">
    <source>
    </source>
</evidence>
<evidence type="ECO:0007744" key="7">
    <source>
    </source>
</evidence>
<evidence type="ECO:0007829" key="8">
    <source>
        <dbReference type="PDB" id="2MZJ"/>
    </source>
</evidence>